<protein>
    <recommendedName>
        <fullName>Src substrate cortactin</fullName>
    </recommendedName>
</protein>
<feature type="chain" id="PRO_0000072190" description="Src substrate cortactin">
    <location>
        <begin position="1"/>
        <end position="546"/>
    </location>
</feature>
<feature type="repeat" description="Cortactin 1">
    <location>
        <begin position="80"/>
        <end position="116"/>
    </location>
</feature>
<feature type="repeat" description="Cortactin 2">
    <location>
        <begin position="117"/>
        <end position="153"/>
    </location>
</feature>
<feature type="repeat" description="Cortactin 3">
    <location>
        <begin position="154"/>
        <end position="190"/>
    </location>
</feature>
<feature type="repeat" description="Cortactin 4">
    <location>
        <begin position="191"/>
        <end position="227"/>
    </location>
</feature>
<feature type="repeat" description="Cortactin 5">
    <location>
        <begin position="228"/>
        <end position="264"/>
    </location>
</feature>
<feature type="repeat" description="Cortactin 6">
    <location>
        <begin position="265"/>
        <end position="301"/>
    </location>
</feature>
<feature type="repeat" description="Cortactin 7; truncated">
    <location>
        <begin position="302"/>
        <end position="324"/>
    </location>
</feature>
<feature type="domain" description="SH3" evidence="5">
    <location>
        <begin position="488"/>
        <end position="546"/>
    </location>
</feature>
<feature type="region of interest" description="Disordered" evidence="6">
    <location>
        <begin position="1"/>
        <end position="28"/>
    </location>
</feature>
<feature type="region of interest" description="Disordered" evidence="6">
    <location>
        <begin position="355"/>
        <end position="424"/>
    </location>
</feature>
<feature type="coiled-coil region" evidence="4">
    <location>
        <begin position="348"/>
        <end position="401"/>
    </location>
</feature>
<feature type="compositionally biased region" description="Acidic residues" evidence="6">
    <location>
        <begin position="17"/>
        <end position="28"/>
    </location>
</feature>
<feature type="compositionally biased region" description="Basic and acidic residues" evidence="6">
    <location>
        <begin position="357"/>
        <end position="396"/>
    </location>
</feature>
<feature type="modified residue" description="N6-acetyllysine" evidence="23">
    <location>
        <position position="87"/>
    </location>
</feature>
<feature type="modified residue" description="N6-acetyllysine" evidence="17">
    <location>
        <position position="107"/>
    </location>
</feature>
<feature type="modified residue" description="Phosphoserine" evidence="22">
    <location>
        <position position="113"/>
    </location>
</feature>
<feature type="modified residue" description="Omega-N-methylarginine" evidence="24">
    <location>
        <position position="119"/>
    </location>
</feature>
<feature type="modified residue" description="N6-acetyllysine" evidence="23">
    <location>
        <position position="124"/>
    </location>
</feature>
<feature type="modified residue" description="N6-acetyllysine; alternate" evidence="23">
    <location>
        <position position="144"/>
    </location>
</feature>
<feature type="modified residue" description="Phosphoserine" evidence="2">
    <location>
        <position position="150"/>
    </location>
</feature>
<feature type="modified residue" description="N6-acetyllysine" evidence="17">
    <location>
        <position position="152"/>
    </location>
</feature>
<feature type="modified residue" description="N6-acetyllysine" evidence="23">
    <location>
        <position position="161"/>
    </location>
</feature>
<feature type="modified residue" description="N6-acetyllysine" evidence="17">
    <location>
        <position position="171"/>
    </location>
</feature>
<feature type="modified residue" description="N6-acetyllysine; alternate" evidence="17 23">
    <location>
        <position position="181"/>
    </location>
</feature>
<feature type="modified residue" description="N6-acetyllysine" evidence="17">
    <location>
        <position position="193"/>
    </location>
</feature>
<feature type="modified residue" description="N6-acetyllysine" evidence="23">
    <location>
        <position position="198"/>
    </location>
</feature>
<feature type="modified residue" description="N6-acetyllysine" evidence="17 23">
    <location>
        <position position="235"/>
    </location>
</feature>
<feature type="modified residue" description="Phosphoserine" evidence="2">
    <location>
        <position position="261"/>
    </location>
</feature>
<feature type="modified residue" description="N6-acetyllysine" evidence="23">
    <location>
        <position position="272"/>
    </location>
</feature>
<feature type="modified residue" description="N6-acetyllysine; alternate" evidence="23">
    <location>
        <position position="295"/>
    </location>
</feature>
<feature type="modified residue" description="N6-acetyllysine" evidence="2">
    <location>
        <position position="304"/>
    </location>
</feature>
<feature type="modified residue" description="N6-acetyllysine" evidence="17 23">
    <location>
        <position position="309"/>
    </location>
</feature>
<feature type="modified residue" description="N6-acetyllysine" evidence="17">
    <location>
        <position position="314"/>
    </location>
</feature>
<feature type="modified residue" description="N6-acetyllysine" evidence="23">
    <location>
        <position position="346"/>
    </location>
</feature>
<feature type="modified residue" description="Phosphothreonine" evidence="21 22">
    <location>
        <position position="401"/>
    </location>
</feature>
<feature type="modified residue" description="Phosphoserine" evidence="21 22">
    <location>
        <position position="405"/>
    </location>
</feature>
<feature type="modified residue" description="Phosphoserine" evidence="21 22">
    <location>
        <position position="407"/>
    </location>
</feature>
<feature type="modified residue" description="Phosphoserine" evidence="2">
    <location>
        <position position="417"/>
    </location>
</feature>
<feature type="modified residue" description="Phosphoserine" evidence="22">
    <location>
        <position position="418"/>
    </location>
</feature>
<feature type="modified residue" description="Phosphotyrosine" evidence="3">
    <location>
        <position position="421"/>
    </location>
</feature>
<feature type="modified residue" description="Phosphotyrosine" evidence="2">
    <location>
        <position position="442"/>
    </location>
</feature>
<feature type="modified residue" description="Phosphoserine" evidence="2">
    <location>
        <position position="443"/>
    </location>
</feature>
<feature type="modified residue" description="Phosphotyrosine; by FAK1" evidence="3">
    <location>
        <position position="466"/>
    </location>
</feature>
<feature type="modified residue" description="Phosphotyrosine; by SRC" evidence="11">
    <location>
        <position position="482"/>
    </location>
</feature>
<feature type="modified residue" description="Phosphotyrosine; by SRC" evidence="11">
    <location>
        <position position="485"/>
    </location>
</feature>
<feature type="cross-link" description="Glycyl lysine isopeptide (Lys-Gly) (interchain with G-Cter in SUMO1); alternate" evidence="2">
    <location>
        <position position="144"/>
    </location>
</feature>
<feature type="cross-link" description="Glycyl lysine isopeptide (Lys-Gly) (interchain with G-Cter in SUMO2); alternate" evidence="2">
    <location>
        <position position="144"/>
    </location>
</feature>
<feature type="cross-link" description="Glycyl lysine isopeptide (Lys-Gly) (interchain with G-Cter in SUMO1); alternate" evidence="2">
    <location>
        <position position="181"/>
    </location>
</feature>
<feature type="cross-link" description="Glycyl lysine isopeptide (Lys-Gly) (interchain with G-Cter in SUMO2); alternate" evidence="2">
    <location>
        <position position="181"/>
    </location>
</feature>
<feature type="cross-link" description="Glycyl lysine isopeptide (Lys-Gly) (interchain with G-Cter in SUMO1)" evidence="2">
    <location>
        <position position="218"/>
    </location>
</feature>
<feature type="cross-link" description="Glycyl lysine isopeptide (Lys-Gly) (interchain with G-Cter in SUMO2); alternate" evidence="2">
    <location>
        <position position="295"/>
    </location>
</feature>
<feature type="mutagenesis site" description="Abolishes cortactin-mediated endocytosis of KCNA2." evidence="10">
    <original>W</original>
    <variation>A</variation>
    <location>
        <position position="22"/>
    </location>
</feature>
<feature type="mutagenesis site" description="No effect on interaction with KCNA2." evidence="10">
    <original>Y</original>
    <variation>F</variation>
    <location>
        <position position="421"/>
    </location>
</feature>
<feature type="mutagenesis site" description="No effect on interaction with KCNA2, but decreases KCNA2 levels at the cell membrane." evidence="10">
    <original>Y</original>
    <variation>F</variation>
    <location>
        <position position="466"/>
    </location>
</feature>
<feature type="mutagenesis site" description="No effect on interaction with KCNA2, but decreases KCNA2 levels at the cell membrane." evidence="10">
    <original>Y</original>
    <variation>F</variation>
    <location>
        <position position="482"/>
    </location>
</feature>
<feature type="sequence conflict" description="In Ref. 2; AA sequence." evidence="20" ref="2">
    <original>A</original>
    <variation>R</variation>
    <location>
        <position position="9"/>
    </location>
</feature>
<feature type="sequence conflict" description="In Ref. 1; AAA19689." evidence="20" ref="1">
    <original>S</original>
    <variation>P</variation>
    <location>
        <position position="298"/>
    </location>
</feature>
<feature type="strand" evidence="25">
    <location>
        <begin position="493"/>
        <end position="495"/>
    </location>
</feature>
<feature type="strand" evidence="25">
    <location>
        <begin position="514"/>
        <end position="519"/>
    </location>
</feature>
<feature type="strand" evidence="25">
    <location>
        <begin position="522"/>
        <end position="530"/>
    </location>
</feature>
<feature type="strand" evidence="25">
    <location>
        <begin position="533"/>
        <end position="538"/>
    </location>
</feature>
<feature type="helix" evidence="25">
    <location>
        <begin position="539"/>
        <end position="541"/>
    </location>
</feature>
<feature type="strand" evidence="25">
    <location>
        <begin position="542"/>
        <end position="544"/>
    </location>
</feature>
<accession>Q60598</accession>
<accession>Q3UGC2</accession>
<name>SRC8_MOUSE</name>
<gene>
    <name type="primary">Cttn</name>
    <name type="synonym">Ems1</name>
</gene>
<dbReference type="EMBL" id="U03184">
    <property type="protein sequence ID" value="AAA19689.1"/>
    <property type="molecule type" value="mRNA"/>
</dbReference>
<dbReference type="EMBL" id="AK146856">
    <property type="protein sequence ID" value="BAE27485.1"/>
    <property type="molecule type" value="mRNA"/>
</dbReference>
<dbReference type="EMBL" id="AK148010">
    <property type="protein sequence ID" value="BAE28287.1"/>
    <property type="molecule type" value="mRNA"/>
</dbReference>
<dbReference type="EMBL" id="AK168699">
    <property type="protein sequence ID" value="BAE40543.1"/>
    <property type="molecule type" value="mRNA"/>
</dbReference>
<dbReference type="EMBL" id="CH466531">
    <property type="protein sequence ID" value="EDL18251.1"/>
    <property type="molecule type" value="Genomic_DNA"/>
</dbReference>
<dbReference type="CCDS" id="CCDS22049.1"/>
<dbReference type="PIR" id="I48899">
    <property type="entry name" value="I48899"/>
</dbReference>
<dbReference type="RefSeq" id="NP_031829.2">
    <property type="nucleotide sequence ID" value="NM_007803.6"/>
</dbReference>
<dbReference type="PDB" id="3ULR">
    <property type="method" value="X-ray"/>
    <property type="resolution" value="1.65 A"/>
    <property type="chains" value="B=487-546"/>
</dbReference>
<dbReference type="PDB" id="5NV1">
    <property type="method" value="X-ray"/>
    <property type="resolution" value="1.51 A"/>
    <property type="chains" value="A=490-546"/>
</dbReference>
<dbReference type="PDB" id="5NVJ">
    <property type="method" value="X-ray"/>
    <property type="resolution" value="1.18 A"/>
    <property type="chains" value="A/B=490-546"/>
</dbReference>
<dbReference type="PDB" id="5NXJ">
    <property type="method" value="X-ray"/>
    <property type="resolution" value="2.28 A"/>
    <property type="chains" value="A/B/C/D/E/F=490-546"/>
</dbReference>
<dbReference type="PDB" id="7PLL">
    <property type="method" value="NMR"/>
    <property type="chains" value="A=490-546"/>
</dbReference>
<dbReference type="PDB" id="8P94">
    <property type="method" value="EM"/>
    <property type="resolution" value="3.30 A"/>
    <property type="chains" value="I=1-546"/>
</dbReference>
<dbReference type="PDB" id="8TAH">
    <property type="method" value="EM"/>
    <property type="resolution" value="2.89 A"/>
    <property type="chains" value="H=1-76"/>
</dbReference>
<dbReference type="PDBsum" id="3ULR"/>
<dbReference type="PDBsum" id="5NV1"/>
<dbReference type="PDBsum" id="5NVJ"/>
<dbReference type="PDBsum" id="5NXJ"/>
<dbReference type="PDBsum" id="7PLL"/>
<dbReference type="PDBsum" id="8P94"/>
<dbReference type="PDBsum" id="8TAH"/>
<dbReference type="EMDB" id="EMD-17558"/>
<dbReference type="EMDB" id="EMD-41135"/>
<dbReference type="SMR" id="Q60598"/>
<dbReference type="BioGRID" id="198978">
    <property type="interactions" value="49"/>
</dbReference>
<dbReference type="CORUM" id="Q60598"/>
<dbReference type="DIP" id="DIP-31562N"/>
<dbReference type="ELM" id="Q60598"/>
<dbReference type="FunCoup" id="Q60598">
    <property type="interactions" value="1825"/>
</dbReference>
<dbReference type="IntAct" id="Q60598">
    <property type="interactions" value="44"/>
</dbReference>
<dbReference type="MINT" id="Q60598"/>
<dbReference type="STRING" id="10090.ENSMUSP00000099368"/>
<dbReference type="GlyGen" id="Q60598">
    <property type="glycosylation" value="1 site, 1 O-linked glycan (1 site)"/>
</dbReference>
<dbReference type="iPTMnet" id="Q60598"/>
<dbReference type="PhosphoSitePlus" id="Q60598"/>
<dbReference type="SwissPalm" id="Q60598"/>
<dbReference type="jPOST" id="Q60598"/>
<dbReference type="PaxDb" id="10090-ENSMUSP00000099368"/>
<dbReference type="PeptideAtlas" id="Q60598"/>
<dbReference type="ProteomicsDB" id="257360"/>
<dbReference type="Pumba" id="Q60598"/>
<dbReference type="Antibodypedia" id="4416">
    <property type="antibodies" value="972 antibodies from 45 providers"/>
</dbReference>
<dbReference type="DNASU" id="13043"/>
<dbReference type="Ensembl" id="ENSMUST00000103079.4">
    <property type="protein sequence ID" value="ENSMUSP00000099368.4"/>
    <property type="gene ID" value="ENSMUSG00000031078.16"/>
</dbReference>
<dbReference type="GeneID" id="13043"/>
<dbReference type="KEGG" id="mmu:13043"/>
<dbReference type="UCSC" id="uc009kqh.2">
    <property type="organism name" value="mouse"/>
</dbReference>
<dbReference type="AGR" id="MGI:99695"/>
<dbReference type="CTD" id="2017"/>
<dbReference type="MGI" id="MGI:99695">
    <property type="gene designation" value="Cttn"/>
</dbReference>
<dbReference type="VEuPathDB" id="HostDB:ENSMUSG00000031078"/>
<dbReference type="eggNOG" id="ENOG502QS6C">
    <property type="taxonomic scope" value="Eukaryota"/>
</dbReference>
<dbReference type="GeneTree" id="ENSGT00940000158565"/>
<dbReference type="InParanoid" id="Q60598"/>
<dbReference type="OMA" id="VGFQEQD"/>
<dbReference type="OrthoDB" id="5971719at2759"/>
<dbReference type="PhylomeDB" id="Q60598"/>
<dbReference type="TreeFam" id="TF318935"/>
<dbReference type="BioGRID-ORCS" id="13043">
    <property type="hits" value="7 hits in 80 CRISPR screens"/>
</dbReference>
<dbReference type="CD-CODE" id="9F5326C7">
    <property type="entry name" value="Synthetic Condensate 000213"/>
</dbReference>
<dbReference type="CD-CODE" id="CE726F99">
    <property type="entry name" value="Postsynaptic density"/>
</dbReference>
<dbReference type="ChiTaRS" id="Cttn">
    <property type="organism name" value="mouse"/>
</dbReference>
<dbReference type="EvolutionaryTrace" id="Q60598"/>
<dbReference type="PRO" id="PR:Q60598"/>
<dbReference type="Proteomes" id="UP000000589">
    <property type="component" value="Chromosome 7"/>
</dbReference>
<dbReference type="RNAct" id="Q60598">
    <property type="molecule type" value="protein"/>
</dbReference>
<dbReference type="Bgee" id="ENSMUSG00000031078">
    <property type="expression patterns" value="Expressed in renal medulla collecting duct and 270 other cell types or tissues"/>
</dbReference>
<dbReference type="ExpressionAtlas" id="Q60598">
    <property type="expression patterns" value="baseline and differential"/>
</dbReference>
<dbReference type="GO" id="GO:0005884">
    <property type="term" value="C:actin filament"/>
    <property type="evidence" value="ECO:0007669"/>
    <property type="project" value="Ensembl"/>
</dbReference>
<dbReference type="GO" id="GO:0005938">
    <property type="term" value="C:cell cortex"/>
    <property type="evidence" value="ECO:0000314"/>
    <property type="project" value="MGI"/>
</dbReference>
<dbReference type="GO" id="GO:0030054">
    <property type="term" value="C:cell junction"/>
    <property type="evidence" value="ECO:0000250"/>
    <property type="project" value="UniProtKB"/>
</dbReference>
<dbReference type="GO" id="GO:0005905">
    <property type="term" value="C:clathrin-coated pit"/>
    <property type="evidence" value="ECO:0000250"/>
    <property type="project" value="UniProtKB"/>
</dbReference>
<dbReference type="GO" id="GO:0030863">
    <property type="term" value="C:cortical cytoskeleton"/>
    <property type="evidence" value="ECO:0000250"/>
    <property type="project" value="UniProtKB"/>
</dbReference>
<dbReference type="GO" id="GO:0005737">
    <property type="term" value="C:cytoplasm"/>
    <property type="evidence" value="ECO:0000314"/>
    <property type="project" value="MGI"/>
</dbReference>
<dbReference type="GO" id="GO:0005829">
    <property type="term" value="C:cytosol"/>
    <property type="evidence" value="ECO:0000304"/>
    <property type="project" value="Reactome"/>
</dbReference>
<dbReference type="GO" id="GO:0043197">
    <property type="term" value="C:dendritic spine"/>
    <property type="evidence" value="ECO:0007669"/>
    <property type="project" value="UniProtKB-SubCell"/>
</dbReference>
<dbReference type="GO" id="GO:0005783">
    <property type="term" value="C:endoplasmic reticulum"/>
    <property type="evidence" value="ECO:0007669"/>
    <property type="project" value="UniProtKB-SubCell"/>
</dbReference>
<dbReference type="GO" id="GO:0005925">
    <property type="term" value="C:focal adhesion"/>
    <property type="evidence" value="ECO:0007669"/>
    <property type="project" value="UniProtKB-SubCell"/>
</dbReference>
<dbReference type="GO" id="GO:0098978">
    <property type="term" value="C:glutamatergic synapse"/>
    <property type="evidence" value="ECO:0007669"/>
    <property type="project" value="Ensembl"/>
</dbReference>
<dbReference type="GO" id="GO:0005794">
    <property type="term" value="C:Golgi apparatus"/>
    <property type="evidence" value="ECO:0007669"/>
    <property type="project" value="Ensembl"/>
</dbReference>
<dbReference type="GO" id="GO:0030426">
    <property type="term" value="C:growth cone"/>
    <property type="evidence" value="ECO:0007669"/>
    <property type="project" value="Ensembl"/>
</dbReference>
<dbReference type="GO" id="GO:0030027">
    <property type="term" value="C:lamellipodium"/>
    <property type="evidence" value="ECO:0000314"/>
    <property type="project" value="UniProtKB"/>
</dbReference>
<dbReference type="GO" id="GO:1990023">
    <property type="term" value="C:mitotic spindle midzone"/>
    <property type="evidence" value="ECO:0000314"/>
    <property type="project" value="UniProtKB"/>
</dbReference>
<dbReference type="GO" id="GO:0002102">
    <property type="term" value="C:podosome"/>
    <property type="evidence" value="ECO:0000314"/>
    <property type="project" value="MGI"/>
</dbReference>
<dbReference type="GO" id="GO:0098871">
    <property type="term" value="C:postsynaptic actin cytoskeleton"/>
    <property type="evidence" value="ECO:0007669"/>
    <property type="project" value="Ensembl"/>
</dbReference>
<dbReference type="GO" id="GO:0001726">
    <property type="term" value="C:ruffle"/>
    <property type="evidence" value="ECO:0000314"/>
    <property type="project" value="UniProtKB"/>
</dbReference>
<dbReference type="GO" id="GO:0008076">
    <property type="term" value="C:voltage-gated potassium channel complex"/>
    <property type="evidence" value="ECO:0007669"/>
    <property type="project" value="Ensembl"/>
</dbReference>
<dbReference type="GO" id="GO:0071933">
    <property type="term" value="F:Arp2/3 complex binding"/>
    <property type="evidence" value="ECO:0007669"/>
    <property type="project" value="Ensembl"/>
</dbReference>
<dbReference type="GO" id="GO:0005522">
    <property type="term" value="F:profilin binding"/>
    <property type="evidence" value="ECO:0007669"/>
    <property type="project" value="Ensembl"/>
</dbReference>
<dbReference type="GO" id="GO:0070064">
    <property type="term" value="F:proline-rich region binding"/>
    <property type="evidence" value="ECO:0007669"/>
    <property type="project" value="Ensembl"/>
</dbReference>
<dbReference type="GO" id="GO:0030036">
    <property type="term" value="P:actin cytoskeleton organization"/>
    <property type="evidence" value="ECO:0000250"/>
    <property type="project" value="UniProtKB"/>
</dbReference>
<dbReference type="GO" id="GO:0048870">
    <property type="term" value="P:cell motility"/>
    <property type="evidence" value="ECO:0000250"/>
    <property type="project" value="UniProtKB"/>
</dbReference>
<dbReference type="GO" id="GO:0097062">
    <property type="term" value="P:dendritic spine maintenance"/>
    <property type="evidence" value="ECO:0000316"/>
    <property type="project" value="MGI"/>
</dbReference>
<dbReference type="GO" id="GO:0097191">
    <property type="term" value="P:extrinsic apoptotic signaling pathway"/>
    <property type="evidence" value="ECO:0000316"/>
    <property type="project" value="MGI"/>
</dbReference>
<dbReference type="GO" id="GO:0048041">
    <property type="term" value="P:focal adhesion assembly"/>
    <property type="evidence" value="ECO:0000250"/>
    <property type="project" value="UniProtKB"/>
</dbReference>
<dbReference type="GO" id="GO:0006886">
    <property type="term" value="P:intracellular protein transport"/>
    <property type="evidence" value="ECO:0000315"/>
    <property type="project" value="UniProtKB"/>
</dbReference>
<dbReference type="GO" id="GO:0097581">
    <property type="term" value="P:lamellipodium organization"/>
    <property type="evidence" value="ECO:0000250"/>
    <property type="project" value="UniProtKB"/>
</dbReference>
<dbReference type="GO" id="GO:0098885">
    <property type="term" value="P:modification of postsynaptic actin cytoskeleton"/>
    <property type="evidence" value="ECO:0007669"/>
    <property type="project" value="Ensembl"/>
</dbReference>
<dbReference type="GO" id="GO:2001237">
    <property type="term" value="P:negative regulation of extrinsic apoptotic signaling pathway"/>
    <property type="evidence" value="ECO:0000316"/>
    <property type="project" value="MGI"/>
</dbReference>
<dbReference type="GO" id="GO:0048812">
    <property type="term" value="P:neuron projection morphogenesis"/>
    <property type="evidence" value="ECO:0000250"/>
    <property type="project" value="UniProtKB"/>
</dbReference>
<dbReference type="GO" id="GO:0030838">
    <property type="term" value="P:positive regulation of actin filament polymerization"/>
    <property type="evidence" value="ECO:0000250"/>
    <property type="project" value="UniProtKB"/>
</dbReference>
<dbReference type="GO" id="GO:0050921">
    <property type="term" value="P:positive regulation of chemotaxis"/>
    <property type="evidence" value="ECO:0007669"/>
    <property type="project" value="Ensembl"/>
</dbReference>
<dbReference type="GO" id="GO:0045987">
    <property type="term" value="P:positive regulation of smooth muscle contraction"/>
    <property type="evidence" value="ECO:0007669"/>
    <property type="project" value="Ensembl"/>
</dbReference>
<dbReference type="GO" id="GO:0006898">
    <property type="term" value="P:receptor-mediated endocytosis"/>
    <property type="evidence" value="ECO:0000250"/>
    <property type="project" value="UniProtKB"/>
</dbReference>
<dbReference type="GO" id="GO:0030516">
    <property type="term" value="P:regulation of axon extension"/>
    <property type="evidence" value="ECO:0000250"/>
    <property type="project" value="UniProtKB"/>
</dbReference>
<dbReference type="GO" id="GO:0060491">
    <property type="term" value="P:regulation of cell projection assembly"/>
    <property type="evidence" value="ECO:0007669"/>
    <property type="project" value="Ensembl"/>
</dbReference>
<dbReference type="GO" id="GO:1901524">
    <property type="term" value="P:regulation of mitophagy"/>
    <property type="evidence" value="ECO:0000315"/>
    <property type="project" value="ParkinsonsUK-UCL"/>
</dbReference>
<dbReference type="GO" id="GO:0006930">
    <property type="term" value="P:substrate-dependent cell migration, cell extension"/>
    <property type="evidence" value="ECO:0000316"/>
    <property type="project" value="MGI"/>
</dbReference>
<dbReference type="CDD" id="cd11959">
    <property type="entry name" value="SH3_Cortactin"/>
    <property type="match status" value="1"/>
</dbReference>
<dbReference type="DisProt" id="DP01752"/>
<dbReference type="FunFam" id="2.30.30.40:FF:000087">
    <property type="entry name" value="Src substrate cortactin"/>
    <property type="match status" value="1"/>
</dbReference>
<dbReference type="Gene3D" id="2.30.30.40">
    <property type="entry name" value="SH3 Domains"/>
    <property type="match status" value="1"/>
</dbReference>
<dbReference type="InterPro" id="IPR035716">
    <property type="entry name" value="Cortactin_SH3"/>
</dbReference>
<dbReference type="InterPro" id="IPR003134">
    <property type="entry name" value="Hs1_Cortactin"/>
</dbReference>
<dbReference type="InterPro" id="IPR036028">
    <property type="entry name" value="SH3-like_dom_sf"/>
</dbReference>
<dbReference type="InterPro" id="IPR001452">
    <property type="entry name" value="SH3_domain"/>
</dbReference>
<dbReference type="PANTHER" id="PTHR10829">
    <property type="entry name" value="CORTACTIN AND DREBRIN"/>
    <property type="match status" value="1"/>
</dbReference>
<dbReference type="PANTHER" id="PTHR10829:SF15">
    <property type="entry name" value="SRC SUBSTRATE CORTACTIN"/>
    <property type="match status" value="1"/>
</dbReference>
<dbReference type="Pfam" id="PF02218">
    <property type="entry name" value="HS1_rep"/>
    <property type="match status" value="7"/>
</dbReference>
<dbReference type="Pfam" id="PF14604">
    <property type="entry name" value="SH3_9"/>
    <property type="match status" value="1"/>
</dbReference>
<dbReference type="PRINTS" id="PR00499">
    <property type="entry name" value="P67PHOX"/>
</dbReference>
<dbReference type="PRINTS" id="PR00452">
    <property type="entry name" value="SH3DOMAIN"/>
</dbReference>
<dbReference type="SMART" id="SM00326">
    <property type="entry name" value="SH3"/>
    <property type="match status" value="1"/>
</dbReference>
<dbReference type="SUPFAM" id="SSF50044">
    <property type="entry name" value="SH3-domain"/>
    <property type="match status" value="1"/>
</dbReference>
<dbReference type="PROSITE" id="PS51090">
    <property type="entry name" value="CORTACTIN"/>
    <property type="match status" value="7"/>
</dbReference>
<dbReference type="PROSITE" id="PS50002">
    <property type="entry name" value="SH3"/>
    <property type="match status" value="1"/>
</dbReference>
<comment type="function">
    <text evidence="2 3 9 10 12">Contributes to the organization of the actin cytoskeleton and cell shape (PubMed:17403031). Plays a role in the formation of lamellipodia and in cell migration (By similarity). Plays a role in the regulation of neuron morphology, axon growth and formation of neuronal growth cones (By similarity). Through its interaction with CTTNBP2, involved in the regulation of neuronal spine density (PubMed:22262902). Plays a role in focal adhesion assembly and turnover (By similarity). In complex with ABL1 and MYLK regulates cortical actin-based cytoskeletal rearrangement critical to sphingosine 1-phosphate (S1P)-mediated endothelial cell (EC) barrier enhancement (By similarity). Plays a role in intracellular protein transport and endocytosis, and in modulating the levels of potassium channels present at the cell membrane (PubMed:17959782). Plays a role in receptor-mediated endocytosis via clathrin-coated pits (By similarity). Required for stabilization of KCNH1 channels at the cell membrane (By similarity).</text>
</comment>
<comment type="subunit">
    <text evidence="2 3 7 8 10 12 13 14 15 16 17">Part of a complex composed of NEDD9, AURKA and CTTN; within the complex NEDD9 acts as a scaffold protein and is required for complex formation (By similarity). Interacts (via N-terminus) with NEDD9 (PubMed:24574519). Identified in a complex containing FGFR4, NCAM1, CDH2, PLCG1, FRS2, SRC, SHC1, GAP43 and CTTN. Forms a complex with ABL1 and MYLK (By similarity). Interacts with SHANK2 and SHANK3 (via its SH3 domain). Interacts with PLXDC2 and SRCIN1. Interacts with SAMSN1 (via SH3 domain). Interacts (via SH3 domain) with ASAP1 (via Pro-rich region). Interacts (via SH3 domain) with DNM2. Interacts with ACTN1 (By similarity). Interacts with FER. Interacts with KCNA2 (via non-phosphorylated C-terminus). Interacts with FGD1. Interacts with ABL2 (PubMed:22297987). Interacts with CTTNBP2NL; this interaction may target CTTN to stress fibers. Interacts with CTTNBP2; this interaction may target CTTN at the cell cortex or dendritic spines. Interacts with KCNH1 (By similarity). Interacts (via SH3 domain) with DIP2A (via N-terminus); the interaction enhances CTTN acetylation and is required for proper synaptic transmission (PubMed:31600191). Interacts with XIRP1 (via N-terminus); the interaction promotes CTTN localization to intercalated disks in cardiomyocytes (PubMed:23296090).</text>
</comment>
<comment type="interaction">
    <interactant intactId="EBI-397955">
        <id>Q60598</id>
    </interactant>
    <interactant intactId="EBI-773994">
        <id>Q99JY9</id>
        <label>Actr3</label>
    </interactant>
    <organismsDiffer>false</organismsDiffer>
    <experiments>5</experiments>
</comment>
<comment type="interaction">
    <interactant intactId="EBI-397955">
        <id>Q60598</id>
    </interactant>
    <interactant intactId="EBI-7644904">
        <id>Q9JIY2</id>
        <label>Cbll1</label>
    </interactant>
    <organismsDiffer>false</organismsDiffer>
    <experiments>4</experiments>
</comment>
<comment type="interaction">
    <interactant intactId="EBI-397955">
        <id>Q60598</id>
    </interactant>
    <interactant intactId="EBI-529924">
        <id>P30999</id>
        <label>Ctnnd1</label>
    </interactant>
    <organismsDiffer>false</organismsDiffer>
    <experiments>4</experiments>
</comment>
<comment type="interaction">
    <interactant intactId="EBI-397955">
        <id>Q60598</id>
    </interactant>
    <interactant intactId="EBI-642337">
        <id>P39054</id>
        <label>Dnm2</label>
    </interactant>
    <organismsDiffer>false</organismsDiffer>
    <experiments>2</experiments>
</comment>
<comment type="interaction">
    <interactant intactId="EBI-397955">
        <id>Q60598</id>
    </interactant>
    <interactant intactId="EBI-642457">
        <id>Q9JKY5</id>
        <label>Hip1r</label>
    </interactant>
    <organismsDiffer>false</organismsDiffer>
    <experiments>4</experiments>
</comment>
<comment type="interaction">
    <interactant intactId="EBI-397955">
        <id>Q60598</id>
    </interactant>
    <interactant intactId="EBI-644033">
        <id>P63141</id>
        <label>Kcna2</label>
    </interactant>
    <organismsDiffer>false</organismsDiffer>
    <experiments>3</experiments>
</comment>
<comment type="interaction">
    <interactant intactId="EBI-397955">
        <id>Q60598</id>
    </interactant>
    <interactant intactId="EBI-1633915">
        <id>Q08460</id>
        <label>Kcnma1</label>
    </interactant>
    <organismsDiffer>false</organismsDiffer>
    <experiments>2</experiments>
</comment>
<comment type="interaction">
    <interactant intactId="EBI-397955">
        <id>Q60598</id>
    </interactant>
    <interactant intactId="EBI-642417">
        <id>Q91YD9</id>
        <label>Wasl</label>
    </interactant>
    <organismsDiffer>false</organismsDiffer>
    <experiments>4</experiments>
</comment>
<comment type="interaction">
    <interactant intactId="EBI-397955">
        <id>Q60598</id>
    </interactant>
    <interactant intactId="EBI-351419">
        <id>P61157</id>
        <label>ACTR3</label>
    </interactant>
    <organismsDiffer>true</organismsDiffer>
    <experiments>4</experiments>
</comment>
<comment type="interaction">
    <interactant intactId="EBI-397955">
        <id>Q60598</id>
    </interactant>
    <interactant intactId="EBI-22229752">
        <id>Q8X482</id>
        <label>espF(U)</label>
    </interactant>
    <organismsDiffer>true</organismsDiffer>
    <experiments>6</experiments>
</comment>
<comment type="interaction">
    <interactant intactId="EBI-397955">
        <id>Q60598</id>
    </interactant>
    <interactant intactId="EBI-301697">
        <id>Q9UBN7</id>
        <label>HDAC6</label>
    </interactant>
    <organismsDiffer>true</organismsDiffer>
    <experiments>3</experiments>
</comment>
<comment type="interaction">
    <interactant intactId="EBI-397955">
        <id>Q60598</id>
    </interactant>
    <interactant intactId="EBI-473954">
        <id>O43312</id>
        <label>MTSS1</label>
    </interactant>
    <organismsDiffer>true</organismsDiffer>
    <experiments>2</experiments>
</comment>
<comment type="interaction">
    <interactant intactId="EBI-397955">
        <id>Q60598</id>
    </interactant>
    <interactant intactId="EBI-6480811">
        <id>Q7DB77</id>
        <label>tir</label>
    </interactant>
    <organismsDiffer>true</organismsDiffer>
    <experiments>4</experiments>
</comment>
<comment type="interaction">
    <interactant intactId="EBI-397955">
        <id>Q60598</id>
    </interactant>
    <interactant intactId="EBI-6142604">
        <id>O08816</id>
        <label>Wasl</label>
    </interactant>
    <organismsDiffer>true</organismsDiffer>
    <experiments>2</experiments>
</comment>
<comment type="interaction">
    <interactant intactId="EBI-397955">
        <id>Q60598</id>
    </interactant>
    <interactant intactId="EBI-6162776">
        <id>Q95107</id>
        <label>WASL</label>
    </interactant>
    <organismsDiffer>true</organismsDiffer>
    <experiments>2</experiments>
</comment>
<comment type="interaction">
    <interactant intactId="EBI-397955">
        <id>Q60598</id>
    </interactant>
    <interactant intactId="EBI-346356">
        <id>O43516</id>
        <label>WIPF1</label>
    </interactant>
    <organismsDiffer>true</organismsDiffer>
    <experiments>4</experiments>
</comment>
<comment type="subcellular location">
    <subcellularLocation>
        <location evidence="2">Cytoplasm</location>
        <location evidence="2">Cytoskeleton</location>
    </subcellularLocation>
    <subcellularLocation>
        <location evidence="2">Cell projection</location>
        <location evidence="2">Lamellipodium</location>
    </subcellularLocation>
    <subcellularLocation>
        <location>Cell projection</location>
        <location>Ruffle</location>
    </subcellularLocation>
    <subcellularLocation>
        <location>Cell projection</location>
        <location>Dendrite</location>
    </subcellularLocation>
    <subcellularLocation>
        <location evidence="3">Cell projection</location>
    </subcellularLocation>
    <subcellularLocation>
        <location evidence="3">Cell membrane</location>
        <topology evidence="20">Peripheral membrane protein</topology>
        <orientation evidence="20">Cytoplasmic side</orientation>
    </subcellularLocation>
    <subcellularLocation>
        <location evidence="1">Cell projection</location>
        <location evidence="1">Podosome</location>
    </subcellularLocation>
    <subcellularLocation>
        <location evidence="3">Cell junction</location>
    </subcellularLocation>
    <subcellularLocation>
        <location evidence="3">Cell junction</location>
        <location evidence="3">Focal adhesion</location>
    </subcellularLocation>
    <subcellularLocation>
        <location evidence="3">Membrane</location>
        <location evidence="3">Clathrin-coated pit</location>
    </subcellularLocation>
    <subcellularLocation>
        <location>Cell projection</location>
        <location>Dendritic spine</location>
    </subcellularLocation>
    <subcellularLocation>
        <location evidence="2">Cytoplasm</location>
        <location evidence="2">Cell cortex</location>
    </subcellularLocation>
    <subcellularLocation>
        <location evidence="1">Endoplasmic reticulum</location>
    </subcellularLocation>
    <text evidence="2 3">Colocalizes transiently with PTK2/FAK1 at focal adhesions (By similarity). Associated with membrane ruffles and lamellipodia. In the presence of CTTNBP2NL, colocalizes with stress fibers. In the presence of CTTNBP2, localizes at the cell cortex. In response to neuronal activation by glutamate, redistributes from dendritic spines to the dendritic shaft. Colocalizes with DNM2 at the basis of filopodia in hippocampus neuron growth zones (By similarity).</text>
</comment>
<comment type="tissue specificity">
    <text evidence="15 18">Expressed at intercalated disks in the heart (at protein level) (PubMed:23296090). Expressed in most tissues, except in B-lymphocytes or plasma cells (PubMed:7516062).</text>
</comment>
<comment type="domain">
    <text evidence="20">The SH3 motif may mediate binding to the cytoskeleton.</text>
</comment>
<comment type="PTM">
    <text evidence="2">Acetylated.</text>
</comment>
<comment type="PTM">
    <text evidence="2 3 9 11 19">Phosphorylated by FER. Phosphorylated in response to FGR activation (PubMed:7693700). Phosphorylation by SRC promotes MYLK binding (By similarity). Phosphorylated on tyrosine residues in response to CHRM1 activation (By similarity). Phosphorylated by PTK2/FAK1 in response to cell adhesion (By similarity). Tyrosine phosphorylation in transformed cells may contribute to cellular growth regulation and transformation. Phosphorylated by PKN2 at both serine and threonine residues in a GTP-bound Rac1-dependent manner in hyaluronan-induced astrocytes and hence down-regulated CTTN ability to associate with filamentous actin.</text>
</comment>
<organism>
    <name type="scientific">Mus musculus</name>
    <name type="common">Mouse</name>
    <dbReference type="NCBI Taxonomy" id="10090"/>
    <lineage>
        <taxon>Eukaryota</taxon>
        <taxon>Metazoa</taxon>
        <taxon>Chordata</taxon>
        <taxon>Craniata</taxon>
        <taxon>Vertebrata</taxon>
        <taxon>Euteleostomi</taxon>
        <taxon>Mammalia</taxon>
        <taxon>Eutheria</taxon>
        <taxon>Euarchontoglires</taxon>
        <taxon>Glires</taxon>
        <taxon>Rodentia</taxon>
        <taxon>Myomorpha</taxon>
        <taxon>Muroidea</taxon>
        <taxon>Muridae</taxon>
        <taxon>Murinae</taxon>
        <taxon>Mus</taxon>
        <taxon>Mus</taxon>
    </lineage>
</organism>
<evidence type="ECO:0000250" key="1">
    <source>
        <dbReference type="UniProtKB" id="Q01406"/>
    </source>
</evidence>
<evidence type="ECO:0000250" key="2">
    <source>
        <dbReference type="UniProtKB" id="Q14247"/>
    </source>
</evidence>
<evidence type="ECO:0000250" key="3">
    <source>
        <dbReference type="UniProtKB" id="Q66HL2"/>
    </source>
</evidence>
<evidence type="ECO:0000255" key="4"/>
<evidence type="ECO:0000255" key="5">
    <source>
        <dbReference type="PROSITE-ProRule" id="PRU00192"/>
    </source>
</evidence>
<evidence type="ECO:0000256" key="6">
    <source>
        <dbReference type="SAM" id="MobiDB-lite"/>
    </source>
</evidence>
<evidence type="ECO:0000269" key="7">
    <source>
    </source>
</evidence>
<evidence type="ECO:0000269" key="8">
    <source>
    </source>
</evidence>
<evidence type="ECO:0000269" key="9">
    <source>
    </source>
</evidence>
<evidence type="ECO:0000269" key="10">
    <source>
    </source>
</evidence>
<evidence type="ECO:0000269" key="11">
    <source>
    </source>
</evidence>
<evidence type="ECO:0000269" key="12">
    <source>
    </source>
</evidence>
<evidence type="ECO:0000269" key="13">
    <source>
    </source>
</evidence>
<evidence type="ECO:0000269" key="14">
    <source>
    </source>
</evidence>
<evidence type="ECO:0000269" key="15">
    <source>
    </source>
</evidence>
<evidence type="ECO:0000269" key="16">
    <source>
    </source>
</evidence>
<evidence type="ECO:0000269" key="17">
    <source>
    </source>
</evidence>
<evidence type="ECO:0000269" key="18">
    <source>
    </source>
</evidence>
<evidence type="ECO:0000269" key="19">
    <source>
    </source>
</evidence>
<evidence type="ECO:0000305" key="20"/>
<evidence type="ECO:0007744" key="21">
    <source>
    </source>
</evidence>
<evidence type="ECO:0007744" key="22">
    <source>
    </source>
</evidence>
<evidence type="ECO:0007744" key="23">
    <source>
    </source>
</evidence>
<evidence type="ECO:0007744" key="24">
    <source>
    </source>
</evidence>
<evidence type="ECO:0007829" key="25">
    <source>
        <dbReference type="PDB" id="5NVJ"/>
    </source>
</evidence>
<proteinExistence type="evidence at protein level"/>
<reference key="1">
    <citation type="journal article" date="1994" name="Oncogene">
        <title>The protein tyrosine kinase substrate cortactin is differentially expressed in murine B lymphoid tumors.</title>
        <authorList>
            <person name="Miglarese M.R."/>
            <person name="Mannion-Henderson J."/>
            <person name="Wu H."/>
            <person name="Parsons J.T."/>
            <person name="Bender T.P."/>
        </authorList>
    </citation>
    <scope>NUCLEOTIDE SEQUENCE [MRNA]</scope>
    <scope>TISSUE SPECIFICITY</scope>
    <source>
        <strain>BALB/cJ</strain>
    </source>
</reference>
<reference key="2">
    <citation type="journal article" date="1993" name="J. Biol. Chem.">
        <title>Murine cortactin is phosphorylated in response to fibroblast growth factor-1 on tyrosine residues late in the G1 phase of the BALB/c 3T3 cell cycle.</title>
        <authorList>
            <person name="Zhan X."/>
            <person name="Hu X."/>
            <person name="Hampton B."/>
            <person name="Burgess W.H."/>
            <person name="Friesel R."/>
            <person name="Maciag T."/>
        </authorList>
    </citation>
    <scope>NUCLEOTIDE SEQUENCE [MRNA]</scope>
    <scope>PROTEIN SEQUENCE OF 125-138; 273-289 AND 534-543</scope>
    <scope>PHOSPHORYLATION</scope>
</reference>
<reference key="3">
    <citation type="journal article" date="2005" name="Science">
        <title>The transcriptional landscape of the mammalian genome.</title>
        <authorList>
            <person name="Carninci P."/>
            <person name="Kasukawa T."/>
            <person name="Katayama S."/>
            <person name="Gough J."/>
            <person name="Frith M.C."/>
            <person name="Maeda N."/>
            <person name="Oyama R."/>
            <person name="Ravasi T."/>
            <person name="Lenhard B."/>
            <person name="Wells C."/>
            <person name="Kodzius R."/>
            <person name="Shimokawa K."/>
            <person name="Bajic V.B."/>
            <person name="Brenner S.E."/>
            <person name="Batalov S."/>
            <person name="Forrest A.R."/>
            <person name="Zavolan M."/>
            <person name="Davis M.J."/>
            <person name="Wilming L.G."/>
            <person name="Aidinis V."/>
            <person name="Allen J.E."/>
            <person name="Ambesi-Impiombato A."/>
            <person name="Apweiler R."/>
            <person name="Aturaliya R.N."/>
            <person name="Bailey T.L."/>
            <person name="Bansal M."/>
            <person name="Baxter L."/>
            <person name="Beisel K.W."/>
            <person name="Bersano T."/>
            <person name="Bono H."/>
            <person name="Chalk A.M."/>
            <person name="Chiu K.P."/>
            <person name="Choudhary V."/>
            <person name="Christoffels A."/>
            <person name="Clutterbuck D.R."/>
            <person name="Crowe M.L."/>
            <person name="Dalla E."/>
            <person name="Dalrymple B.P."/>
            <person name="de Bono B."/>
            <person name="Della Gatta G."/>
            <person name="di Bernardo D."/>
            <person name="Down T."/>
            <person name="Engstrom P."/>
            <person name="Fagiolini M."/>
            <person name="Faulkner G."/>
            <person name="Fletcher C.F."/>
            <person name="Fukushima T."/>
            <person name="Furuno M."/>
            <person name="Futaki S."/>
            <person name="Gariboldi M."/>
            <person name="Georgii-Hemming P."/>
            <person name="Gingeras T.R."/>
            <person name="Gojobori T."/>
            <person name="Green R.E."/>
            <person name="Gustincich S."/>
            <person name="Harbers M."/>
            <person name="Hayashi Y."/>
            <person name="Hensch T.K."/>
            <person name="Hirokawa N."/>
            <person name="Hill D."/>
            <person name="Huminiecki L."/>
            <person name="Iacono M."/>
            <person name="Ikeo K."/>
            <person name="Iwama A."/>
            <person name="Ishikawa T."/>
            <person name="Jakt M."/>
            <person name="Kanapin A."/>
            <person name="Katoh M."/>
            <person name="Kawasawa Y."/>
            <person name="Kelso J."/>
            <person name="Kitamura H."/>
            <person name="Kitano H."/>
            <person name="Kollias G."/>
            <person name="Krishnan S.P."/>
            <person name="Kruger A."/>
            <person name="Kummerfeld S.K."/>
            <person name="Kurochkin I.V."/>
            <person name="Lareau L.F."/>
            <person name="Lazarevic D."/>
            <person name="Lipovich L."/>
            <person name="Liu J."/>
            <person name="Liuni S."/>
            <person name="McWilliam S."/>
            <person name="Madan Babu M."/>
            <person name="Madera M."/>
            <person name="Marchionni L."/>
            <person name="Matsuda H."/>
            <person name="Matsuzawa S."/>
            <person name="Miki H."/>
            <person name="Mignone F."/>
            <person name="Miyake S."/>
            <person name="Morris K."/>
            <person name="Mottagui-Tabar S."/>
            <person name="Mulder N."/>
            <person name="Nakano N."/>
            <person name="Nakauchi H."/>
            <person name="Ng P."/>
            <person name="Nilsson R."/>
            <person name="Nishiguchi S."/>
            <person name="Nishikawa S."/>
            <person name="Nori F."/>
            <person name="Ohara O."/>
            <person name="Okazaki Y."/>
            <person name="Orlando V."/>
            <person name="Pang K.C."/>
            <person name="Pavan W.J."/>
            <person name="Pavesi G."/>
            <person name="Pesole G."/>
            <person name="Petrovsky N."/>
            <person name="Piazza S."/>
            <person name="Reed J."/>
            <person name="Reid J.F."/>
            <person name="Ring B.Z."/>
            <person name="Ringwald M."/>
            <person name="Rost B."/>
            <person name="Ruan Y."/>
            <person name="Salzberg S.L."/>
            <person name="Sandelin A."/>
            <person name="Schneider C."/>
            <person name="Schoenbach C."/>
            <person name="Sekiguchi K."/>
            <person name="Semple C.A."/>
            <person name="Seno S."/>
            <person name="Sessa L."/>
            <person name="Sheng Y."/>
            <person name="Shibata Y."/>
            <person name="Shimada H."/>
            <person name="Shimada K."/>
            <person name="Silva D."/>
            <person name="Sinclair B."/>
            <person name="Sperling S."/>
            <person name="Stupka E."/>
            <person name="Sugiura K."/>
            <person name="Sultana R."/>
            <person name="Takenaka Y."/>
            <person name="Taki K."/>
            <person name="Tammoja K."/>
            <person name="Tan S.L."/>
            <person name="Tang S."/>
            <person name="Taylor M.S."/>
            <person name="Tegner J."/>
            <person name="Teichmann S.A."/>
            <person name="Ueda H.R."/>
            <person name="van Nimwegen E."/>
            <person name="Verardo R."/>
            <person name="Wei C.L."/>
            <person name="Yagi K."/>
            <person name="Yamanishi H."/>
            <person name="Zabarovsky E."/>
            <person name="Zhu S."/>
            <person name="Zimmer A."/>
            <person name="Hide W."/>
            <person name="Bult C."/>
            <person name="Grimmond S.M."/>
            <person name="Teasdale R.D."/>
            <person name="Liu E.T."/>
            <person name="Brusic V."/>
            <person name="Quackenbush J."/>
            <person name="Wahlestedt C."/>
            <person name="Mattick J.S."/>
            <person name="Hume D.A."/>
            <person name="Kai C."/>
            <person name="Sasaki D."/>
            <person name="Tomaru Y."/>
            <person name="Fukuda S."/>
            <person name="Kanamori-Katayama M."/>
            <person name="Suzuki M."/>
            <person name="Aoki J."/>
            <person name="Arakawa T."/>
            <person name="Iida J."/>
            <person name="Imamura K."/>
            <person name="Itoh M."/>
            <person name="Kato T."/>
            <person name="Kawaji H."/>
            <person name="Kawagashira N."/>
            <person name="Kawashima T."/>
            <person name="Kojima M."/>
            <person name="Kondo S."/>
            <person name="Konno H."/>
            <person name="Nakano K."/>
            <person name="Ninomiya N."/>
            <person name="Nishio T."/>
            <person name="Okada M."/>
            <person name="Plessy C."/>
            <person name="Shibata K."/>
            <person name="Shiraki T."/>
            <person name="Suzuki S."/>
            <person name="Tagami M."/>
            <person name="Waki K."/>
            <person name="Watahiki A."/>
            <person name="Okamura-Oho Y."/>
            <person name="Suzuki H."/>
            <person name="Kawai J."/>
            <person name="Hayashizaki Y."/>
        </authorList>
    </citation>
    <scope>NUCLEOTIDE SEQUENCE [LARGE SCALE MRNA]</scope>
    <source>
        <strain>C57BL/6J</strain>
        <tissue>Amnion</tissue>
        <tissue>Heart</tissue>
    </source>
</reference>
<reference key="4">
    <citation type="submission" date="2005-07" db="EMBL/GenBank/DDBJ databases">
        <authorList>
            <person name="Mural R.J."/>
            <person name="Adams M.D."/>
            <person name="Myers E.W."/>
            <person name="Smith H.O."/>
            <person name="Venter J.C."/>
        </authorList>
    </citation>
    <scope>NUCLEOTIDE SEQUENCE [LARGE SCALE GENOMIC DNA]</scope>
</reference>
<reference key="5">
    <citation type="journal article" date="2001" name="Nat. Cell Biol.">
        <title>N-CAM modulates tumour-cell adhesion to matrix by inducing FGF-receptor signalling.</title>
        <authorList>
            <person name="Cavallaro U."/>
            <person name="Niedermeyer J."/>
            <person name="Fuxa M."/>
            <person name="Christofori G."/>
        </authorList>
    </citation>
    <scope>IDENTIFICATION IN A COMPLEX WITH NCAM1; CDH2; PLCG1; FRS2; SRC; SHC1; FGFR4 AND GAP43</scope>
</reference>
<reference key="6">
    <citation type="journal article" date="2003" name="Hum. Mol. Genet.">
        <title>Fgd1, the Cdc42 GEF responsible for faciogenital dysplasia, directly interacts with cortactin and mAbp1 to modulate cell shape.</title>
        <authorList>
            <person name="Hou P."/>
            <person name="Estrada L."/>
            <person name="Kinley A.W."/>
            <person name="Parsons J.T."/>
            <person name="Vojtek A.B."/>
            <person name="Gorski J.L."/>
        </authorList>
    </citation>
    <scope>SUBCELLULAR LOCATION</scope>
    <scope>INTERACTION WITH FGD1</scope>
</reference>
<reference key="7">
    <citation type="journal article" date="2007" name="J. Neurochem.">
        <title>Hyaluronan-CD44 interaction stimulates Rac1 signaling and PKN gamma kinase activation leading to cytoskeleton function and cell migration in astrocytes.</title>
        <authorList>
            <person name="Bourguignon L.Y."/>
            <person name="Gilad E."/>
            <person name="Peyrollier K."/>
            <person name="Brightman A."/>
            <person name="Swanson R.A."/>
        </authorList>
    </citation>
    <scope>FUNCTION IN ACTIN BUNDLE FORMATION</scope>
    <scope>PHOSPHORYLATION</scope>
</reference>
<reference key="8">
    <citation type="journal article" date="2007" name="Proc. Natl. Acad. Sci. U.S.A.">
        <title>Large-scale phosphorylation analysis of mouse liver.</title>
        <authorList>
            <person name="Villen J."/>
            <person name="Beausoleil S.A."/>
            <person name="Gerber S.A."/>
            <person name="Gygi S.P."/>
        </authorList>
    </citation>
    <scope>PHOSPHORYLATION [LARGE SCALE ANALYSIS] AT THR-401; SER-405 AND SER-407</scope>
    <scope>IDENTIFICATION BY MASS SPECTROMETRY [LARGE SCALE ANALYSIS]</scope>
    <source>
        <tissue>Liver</tissue>
    </source>
</reference>
<reference key="9">
    <citation type="journal article" date="2007" name="Proc. Natl. Acad. Sci. U.S.A.">
        <title>An essential role for cortactin in the modulation of the potassium channel Kv1.2.</title>
        <authorList>
            <person name="Williams M.R."/>
            <person name="Markey J.C."/>
            <person name="Doczi M.A."/>
            <person name="Morielli A.D."/>
        </authorList>
    </citation>
    <scope>FUNCTION</scope>
    <scope>INTERACTION WITH KCNA2</scope>
    <scope>SUBCELLULAR LOCATION</scope>
    <scope>MUTAGENESIS OF TRP-22; TYR-421; TYR-466 AND TYR-482</scope>
</reference>
<reference key="10">
    <citation type="journal article" date="2010" name="Cell">
        <title>A tissue-specific atlas of mouse protein phosphorylation and expression.</title>
        <authorList>
            <person name="Huttlin E.L."/>
            <person name="Jedrychowski M.P."/>
            <person name="Elias J.E."/>
            <person name="Goswami T."/>
            <person name="Rad R."/>
            <person name="Beausoleil S.A."/>
            <person name="Villen J."/>
            <person name="Haas W."/>
            <person name="Sowa M.E."/>
            <person name="Gygi S.P."/>
        </authorList>
    </citation>
    <scope>PHOSPHORYLATION [LARGE SCALE ANALYSIS] AT SER-113; THR-401; SER-405; SER-407 AND SER-418</scope>
    <scope>IDENTIFICATION BY MASS SPECTROMETRY [LARGE SCALE ANALYSIS]</scope>
    <source>
        <tissue>Brain</tissue>
        <tissue>Brown adipose tissue</tissue>
        <tissue>Heart</tissue>
        <tissue>Kidney</tissue>
        <tissue>Liver</tissue>
        <tissue>Lung</tissue>
        <tissue>Pancreas</tissue>
        <tissue>Spleen</tissue>
        <tissue>Testis</tissue>
    </source>
</reference>
<reference key="11">
    <citation type="journal article" date="2012" name="EMBO J.">
        <title>Structure of a novel phosphotyrosine-binding domain in Hakai that targets E-cadherin.</title>
        <authorList>
            <person name="Mukherjee M."/>
            <person name="Chow S.Y."/>
            <person name="Yusoff P."/>
            <person name="Seetharaman J."/>
            <person name="Ng C."/>
            <person name="Sinniah S."/>
            <person name="Koh X.W."/>
            <person name="Asgar N.F."/>
            <person name="Li D."/>
            <person name="Yim D."/>
            <person name="Jackson R.A."/>
            <person name="Yew J."/>
            <person name="Qian J."/>
            <person name="Iyu A."/>
            <person name="Lim Y.P."/>
            <person name="Zhou X."/>
            <person name="Sze S.K."/>
            <person name="Guy G.R."/>
            <person name="Sivaraman J."/>
        </authorList>
    </citation>
    <scope>PHOSPHORYLATION AT TYR-482 AND TYR-485</scope>
</reference>
<reference key="12">
    <citation type="journal article" date="2012" name="J. Neurosci.">
        <title>Cortactin-binding protein 2 modulates the mobility of cortactin and regulates dendritic spine formation and maintenance.</title>
        <authorList>
            <person name="Chen Y.K."/>
            <person name="Hsueh Y.P."/>
        </authorList>
    </citation>
    <scope>FUNCTION</scope>
    <scope>INTERACTION WITH CTTNBP2</scope>
    <scope>SUBCELLULAR LOCATION</scope>
</reference>
<reference key="13">
    <citation type="journal article" date="2012" name="Mol. Biol. Cell">
        <title>CTTNBP2, but not CTTNBP2NL, regulates dendritic spinogenesis and synaptic distribution of the striatin-PP2A complex.</title>
        <authorList>
            <person name="Chen Y.K."/>
            <person name="Chen C.Y."/>
            <person name="Hu H.T."/>
            <person name="Hsueh Y.P."/>
        </authorList>
    </citation>
    <scope>INTERACTION WITH CTTNBP2NL</scope>
    <scope>SUBCELLULAR LOCATION</scope>
</reference>
<reference key="14">
    <citation type="journal article" date="2013" name="Arch. Biochem. Biophys.">
        <title>Intercalated disc protein, mXinalpha, suppresses p120-catenin-induced branching phenotype via its interactions with p120-catenin and cortactin.</title>
        <authorList>
            <person name="Wang Q."/>
            <person name="Lu T.L."/>
            <person name="Adams E."/>
            <person name="Lin J.L."/>
            <person name="Lin J.J."/>
        </authorList>
    </citation>
    <scope>INTERACTION WITH XIRP1</scope>
    <scope>TISSUE SPECIFICITY</scope>
</reference>
<reference key="15">
    <citation type="journal article" date="2013" name="Mol. Cell">
        <title>SIRT5-mediated lysine desuccinylation impacts diverse metabolic pathways.</title>
        <authorList>
            <person name="Park J."/>
            <person name="Chen Y."/>
            <person name="Tishkoff D.X."/>
            <person name="Peng C."/>
            <person name="Tan M."/>
            <person name="Dai L."/>
            <person name="Xie Z."/>
            <person name="Zhang Y."/>
            <person name="Zwaans B.M."/>
            <person name="Skinner M.E."/>
            <person name="Lombard D.B."/>
            <person name="Zhao Y."/>
        </authorList>
    </citation>
    <scope>ACETYLATION [LARGE SCALE ANALYSIS] AT LYS-87; LYS-124; LYS-144; LYS-161; LYS-181; LYS-198; LYS-235; LYS-272; LYS-295; LYS-309 AND LYS-346</scope>
    <scope>IDENTIFICATION BY MASS SPECTROMETRY [LARGE SCALE ANALYSIS]</scope>
    <source>
        <tissue>Embryonic fibroblast</tissue>
    </source>
</reference>
<reference key="16">
    <citation type="journal article" date="2014" name="Mol. Cancer Res.">
        <title>NEDD9 regulates actin dynamics through cortactin deacetylation in an AURKA/HDAC6-dependent manner.</title>
        <authorList>
            <person name="Kozyreva V.K."/>
            <person name="McLaughlin S.L."/>
            <person name="Livengood R.H."/>
            <person name="Calkins R.A."/>
            <person name="Kelley L.C."/>
            <person name="Rajulapati A."/>
            <person name="Ice R.J."/>
            <person name="Smolkin M.B."/>
            <person name="Weed S.A."/>
            <person name="Pugacheva E.N."/>
        </authorList>
    </citation>
    <scope>INTERACTION WITH NEDD9</scope>
</reference>
<reference key="17">
    <citation type="journal article" date="2014" name="Mol. Cell. Proteomics">
        <title>Immunoaffinity enrichment and mass spectrometry analysis of protein methylation.</title>
        <authorList>
            <person name="Guo A."/>
            <person name="Gu H."/>
            <person name="Zhou J."/>
            <person name="Mulhern D."/>
            <person name="Wang Y."/>
            <person name="Lee K.A."/>
            <person name="Yang V."/>
            <person name="Aguiar M."/>
            <person name="Kornhauser J."/>
            <person name="Jia X."/>
            <person name="Ren J."/>
            <person name="Beausoleil S.A."/>
            <person name="Silva J.C."/>
            <person name="Vemulapalli V."/>
            <person name="Bedford M.T."/>
            <person name="Comb M.J."/>
        </authorList>
    </citation>
    <scope>METHYLATION [LARGE SCALE ANALYSIS] AT ARG-119</scope>
    <scope>IDENTIFICATION BY MASS SPECTROMETRY [LARGE SCALE ANALYSIS]</scope>
    <source>
        <tissue>Brain</tissue>
    </source>
</reference>
<reference key="18">
    <citation type="journal article" date="2019" name="PLoS Biol.">
        <title>Autism candidate gene DIP2A regulates spine morphogenesis via acetylation of cortactin.</title>
        <authorList>
            <person name="Ma J."/>
            <person name="Zhang L.Q."/>
            <person name="He Z.X."/>
            <person name="He X.X."/>
            <person name="Wang Y.J."/>
            <person name="Jian Y.L."/>
            <person name="Wang X."/>
            <person name="Zhang B.B."/>
            <person name="Su C."/>
            <person name="Lu J."/>
            <person name="Huang B.Q."/>
            <person name="Zhang Y."/>
            <person name="Wang G.Y."/>
            <person name="Guo W.X."/>
            <person name="Qiu D.L."/>
            <person name="Mei L."/>
            <person name="Xiong W.C."/>
            <person name="Zheng Y.W."/>
            <person name="Zhu X.J."/>
        </authorList>
    </citation>
    <scope>INTERACTION WITH DIP2A</scope>
    <scope>ACETYLATION AT LYS-107; LYS-152; LYS-171; LYS-181; LYS-193; LYS-235; LYS-309 AND LYS-314</scope>
    <scope>IDENTIFICATION BY MASS SPECTROMETRY</scope>
</reference>
<reference key="19">
    <citation type="journal article" date="2012" name="Acta Crystallogr. F">
        <title>Lysozyme contamination facilitates crystallization of a heterotrimeric cortactin-Arg-lysozyme complex.</title>
        <authorList>
            <person name="Liu W."/>
            <person name="MacGrath S.M."/>
            <person name="Koleske A.J."/>
            <person name="Boggon T.J."/>
        </authorList>
    </citation>
    <scope>X-RAY CRYSTALLOGRAPHY (1.65 ANGSTROMS) OF 487-546 IN COMPLEX WITH ABL2</scope>
    <scope>INTERACTION WITH ABL2</scope>
</reference>
<keyword id="KW-0002">3D-structure</keyword>
<keyword id="KW-0007">Acetylation</keyword>
<keyword id="KW-0965">Cell junction</keyword>
<keyword id="KW-1003">Cell membrane</keyword>
<keyword id="KW-0966">Cell projection</keyword>
<keyword id="KW-0168">Coated pit</keyword>
<keyword id="KW-0175">Coiled coil</keyword>
<keyword id="KW-0963">Cytoplasm</keyword>
<keyword id="KW-0206">Cytoskeleton</keyword>
<keyword id="KW-0903">Direct protein sequencing</keyword>
<keyword id="KW-0254">Endocytosis</keyword>
<keyword id="KW-0256">Endoplasmic reticulum</keyword>
<keyword id="KW-1017">Isopeptide bond</keyword>
<keyword id="KW-0472">Membrane</keyword>
<keyword id="KW-0488">Methylation</keyword>
<keyword id="KW-0597">Phosphoprotein</keyword>
<keyword id="KW-1185">Reference proteome</keyword>
<keyword id="KW-0677">Repeat</keyword>
<keyword id="KW-0728">SH3 domain</keyword>
<keyword id="KW-0770">Synapse</keyword>
<keyword id="KW-0832">Ubl conjugation</keyword>
<sequence length="546" mass="61250">MWKASAGHAVSITQDDGGADDWETDPDFVNDVSEKEQRWGAKTVQGSGHQEHINIHKLRENVFQEHQTLKEKELETGPKASHGYGGKFGVEQDRMDRSAVGHEYQSKLSKHCSQVDSVRGFGGKFGVQMDRVDQSAVGFEYQGKTEKHASQKDYSSGFGGKYGVQADRVDKSAVGFDYQGKTEKHESQKDYSKGFGGKYGIDKDKVDKSAVGFEYQGKTEKHESQKDYVKGFGGKFGVQTDRQDKCALGWDHQEKLQLHESQKDYKTGFGGKFGVQSERQDSSAVGFDYKERLAKHESQQDYAKGFGGKYGVQKDRMDKNASTFEEVVQVPSAYQKTVPIEAVTSKTSNIRANFENLAKEREQEDRRKAEAERAQRMAKERQEQEEARRKLEEQARAKKQTPPASPSPQPIEDRPPSSPIYEDAAPFKAEPSYRGSEPEPEYSIEAAGIPEAGSQQGLTYTSEPVYETTEAPGHYQAEDDTYDGYESDLGITAIALYDYQAAGDDEISFDPDDIITNIEMIDDGWWRGVCKGRYGLFPANYVELRQ</sequence>